<protein>
    <recommendedName>
        <fullName>Protein UL20</fullName>
    </recommendedName>
</protein>
<reference key="1">
    <citation type="journal article" date="1988" name="J. Gen. Virol.">
        <title>The complete DNA sequence of the long unique region in the genome of herpes simplex virus type 1.</title>
        <authorList>
            <person name="McGeoch D.J."/>
            <person name="Dalrymple M.A."/>
            <person name="Davison A.J."/>
            <person name="Dolan A."/>
            <person name="Frame M.C."/>
            <person name="McNab D."/>
            <person name="Perry L.J."/>
            <person name="Scott J.E."/>
            <person name="Taylor P."/>
        </authorList>
    </citation>
    <scope>NUCLEOTIDE SEQUENCE [GENOMIC DNA]</scope>
</reference>
<reference key="2">
    <citation type="journal article" date="1991" name="J. Virol.">
        <title>The UL20 gene of herpes simplex virus 1 encodes a function necessary for viral egress.</title>
        <authorList>
            <person name="Baines J.D."/>
            <person name="Ward P.L."/>
            <person name="Campadelli-Fiume G."/>
            <person name="Roizman B."/>
        </authorList>
    </citation>
    <scope>FUNCTION</scope>
    <source>
        <strain>F</strain>
    </source>
</reference>
<reference key="3">
    <citation type="journal article" date="1994" name="J. Virol.">
        <title>Localization and putative function of the UL20 membrane protein in cells infected with herpes simplex virus 1.</title>
        <authorList>
            <person name="Ward P.L."/>
            <person name="Campadelli-Fiume G."/>
            <person name="Avitabile E."/>
            <person name="Roizman B."/>
        </authorList>
    </citation>
    <scope>SUBCELLULAR LOCATION</scope>
    <source>
        <strain>F</strain>
    </source>
</reference>
<reference key="4">
    <citation type="journal article" date="2004" name="J. Virol.">
        <title>Coexpression of UL20p and gK inhibits cell-cell fusion mediated by herpes simplex virus glycoproteins gD, gH-gL, and wild-type gB or an endocytosis-defective gB mutant and downmodulates their cell surface expression.</title>
        <authorList>
            <person name="Avitabile E."/>
            <person name="Lombardi G."/>
            <person name="Gianni T."/>
            <person name="Capri M."/>
            <person name="Campadelli-Fiume G."/>
        </authorList>
    </citation>
    <scope>SUBCELLULAR LOCATION</scope>
    <source>
        <strain>F</strain>
    </source>
</reference>
<reference key="5">
    <citation type="journal article" date="2007" name="Virol. J.">
        <title>The herpes simplex virus UL20 protein functions in glycoprotein K (gK) intracellular transport and virus-induced cell fusion are independent of UL20 functions in cytoplasmic virion envelopment.</title>
        <authorList>
            <person name="Melancon J.M."/>
            <person name="Fulmer P.A."/>
            <person name="Kousoulas K.G."/>
        </authorList>
    </citation>
    <scope>FUNCTION</scope>
    <source>
        <strain>KOS</strain>
    </source>
</reference>
<reference key="6">
    <citation type="journal article" date="2008" name="J. Virol.">
        <title>Functional and physical interactions of the herpes simplex virus type 1 UL20 membrane protein with glycoprotein K.</title>
        <authorList>
            <person name="Foster T.P."/>
            <person name="Chouljenko V.N."/>
            <person name="Kousoulas K.G."/>
        </authorList>
    </citation>
    <scope>INTERACTION WITH GK</scope>
    <source>
        <strain>KOS</strain>
    </source>
</reference>
<reference key="7">
    <citation type="journal article" date="2008" name="J. Virol.">
        <title>Comprehensive characterization of extracellular herpes simplex virus type 1 virions.</title>
        <authorList>
            <person name="Loret S."/>
            <person name="Guay G."/>
            <person name="Lippe R."/>
        </authorList>
    </citation>
    <scope>VIRION</scope>
    <source>
        <strain>F</strain>
    </source>
</reference>
<reference key="8">
    <citation type="journal article" date="2010" name="J. Virol.">
        <title>The herpes simplex virus type 1 UL20 protein and the amino terminus of glycoprotein K (gK) physically interact with gB.</title>
        <authorList>
            <person name="Chouljenko V.N."/>
            <person name="Iyer A.V."/>
            <person name="Chowdhury S."/>
            <person name="Kim J."/>
            <person name="Kousoulas K.G."/>
        </authorList>
    </citation>
    <scope>INTERACTION WITH GB</scope>
</reference>
<comment type="function">
    <text evidence="3 4">Plays an essential role in egress of virus particles from the nucleus, cytoplasmic envelopment and virus-induced cell fusion. Forms a functional protein complex with gK and this interaction is absolutely essential for their coordinate intracellular transport, gK glycosylation, expression on host cell surface, and function. Together, they modulate gB-mediated virus-induced cell fusion and virion egress and therefore actively participate in these processes.</text>
</comment>
<comment type="subunit">
    <text evidence="5 7">Interacts with gK (via N-terminus); this interaction plays a role in the coordinate transport of UL20 and gK to the trans-Golgi network (TGN), and is required for their cell surface expression. Interacts with gB.</text>
</comment>
<comment type="interaction">
    <interactant intactId="EBI-7906325">
        <id>P10204</id>
    </interactant>
    <interactant intactId="EBI-7906305">
        <id>P68331</id>
        <label>gK</label>
    </interactant>
    <organismsDiffer>false</organismsDiffer>
    <experiments>5</experiments>
</comment>
<comment type="subcellular location">
    <subcellularLocation>
        <location evidence="6 8">Virion</location>
    </subcellularLocation>
    <subcellularLocation>
        <location evidence="2">Host Golgi apparatus membrane</location>
        <topology evidence="1">Multi-pass membrane protein</topology>
    </subcellularLocation>
    <subcellularLocation>
        <location evidence="2">Host nucleus membrane</location>
        <topology evidence="1">Multi-pass membrane protein</topology>
    </subcellularLocation>
    <text evidence="2">During virion morphogenesis, this protein probably accumulates in the trans-Golgi where secondary envelopment occurs. It is probably transported with gK to the cell surface from where it is endocytosed and directed to the trans-Golgi network (TGN).</text>
</comment>
<comment type="similarity">
    <text evidence="9">Belongs to the alphaherpesvirinae UL20 family.</text>
</comment>
<dbReference type="EMBL" id="X14112">
    <property type="protein sequence ID" value="CAA32333.1"/>
    <property type="molecule type" value="Genomic_DNA"/>
</dbReference>
<dbReference type="PIR" id="B30084">
    <property type="entry name" value="WMBEWN"/>
</dbReference>
<dbReference type="RefSeq" id="YP_009137094.1">
    <property type="nucleotide sequence ID" value="NC_001806.2"/>
</dbReference>
<dbReference type="IntAct" id="P10204">
    <property type="interactions" value="2"/>
</dbReference>
<dbReference type="MINT" id="P10204"/>
<dbReference type="DNASU" id="2703371"/>
<dbReference type="GeneID" id="2703371"/>
<dbReference type="KEGG" id="vg:2703371"/>
<dbReference type="Proteomes" id="UP000009294">
    <property type="component" value="Segment"/>
</dbReference>
<dbReference type="GO" id="GO:0044178">
    <property type="term" value="C:host cell Golgi membrane"/>
    <property type="evidence" value="ECO:0007669"/>
    <property type="project" value="UniProtKB-SubCell"/>
</dbReference>
<dbReference type="GO" id="GO:0044200">
    <property type="term" value="C:host cell nuclear membrane"/>
    <property type="evidence" value="ECO:0007669"/>
    <property type="project" value="UniProtKB-SubCell"/>
</dbReference>
<dbReference type="GO" id="GO:0016020">
    <property type="term" value="C:membrane"/>
    <property type="evidence" value="ECO:0007669"/>
    <property type="project" value="UniProtKB-KW"/>
</dbReference>
<dbReference type="GO" id="GO:0044423">
    <property type="term" value="C:virion component"/>
    <property type="evidence" value="ECO:0007669"/>
    <property type="project" value="UniProtKB-KW"/>
</dbReference>
<dbReference type="GO" id="GO:0019058">
    <property type="term" value="P:viral life cycle"/>
    <property type="evidence" value="ECO:0007669"/>
    <property type="project" value="InterPro"/>
</dbReference>
<dbReference type="InterPro" id="IPR007629">
    <property type="entry name" value="Herpes_UL20"/>
</dbReference>
<dbReference type="Pfam" id="PF04544">
    <property type="entry name" value="Herpes_UL20"/>
    <property type="match status" value="1"/>
</dbReference>
<sequence>MTMRDDLPLVDRDLVDEAAFGGEEGELPLEEQFSLSSYGTSDFFVSSAYSRLPPHTQPVFSKRVILFLWSFLVLKPLEMVAAGMYYGLTGRVVAPACILAAIVGYYVTWAVRALLLYVNIKRDRLPLSAPVFWGMSVFLGGTALCALFAAAHETFSPDGLFHFIATNQMLPPTDPLRTRALGIACAAGASMWVAAADSFAASANFFLARFWTRAILNAPVAF</sequence>
<gene>
    <name type="primary">UL20</name>
</gene>
<organism>
    <name type="scientific">Human herpesvirus 1 (strain 17)</name>
    <name type="common">HHV-1</name>
    <name type="synonym">Human herpes simplex virus 1</name>
    <dbReference type="NCBI Taxonomy" id="10299"/>
    <lineage>
        <taxon>Viruses</taxon>
        <taxon>Duplodnaviria</taxon>
        <taxon>Heunggongvirae</taxon>
        <taxon>Peploviricota</taxon>
        <taxon>Herviviricetes</taxon>
        <taxon>Herpesvirales</taxon>
        <taxon>Orthoherpesviridae</taxon>
        <taxon>Alphaherpesvirinae</taxon>
        <taxon>Simplexvirus</taxon>
        <taxon>Simplexvirus humanalpha1</taxon>
        <taxon>Human herpesvirus 1</taxon>
    </lineage>
</organism>
<organismHost>
    <name type="scientific">Homo sapiens</name>
    <name type="common">Human</name>
    <dbReference type="NCBI Taxonomy" id="9606"/>
</organismHost>
<name>UL20_HHV11</name>
<keyword id="KW-1040">Host Golgi apparatus</keyword>
<keyword id="KW-1043">Host membrane</keyword>
<keyword id="KW-1048">Host nucleus</keyword>
<keyword id="KW-0472">Membrane</keyword>
<keyword id="KW-1185">Reference proteome</keyword>
<keyword id="KW-0812">Transmembrane</keyword>
<keyword id="KW-1133">Transmembrane helix</keyword>
<keyword id="KW-0946">Virion</keyword>
<feature type="chain" id="PRO_0000115966" description="Protein UL20">
    <location>
        <begin position="1"/>
        <end position="222"/>
    </location>
</feature>
<feature type="transmembrane region" description="Helical" evidence="1">
    <location>
        <begin position="64"/>
        <end position="84"/>
    </location>
</feature>
<feature type="transmembrane region" description="Helical" evidence="1">
    <location>
        <begin position="98"/>
        <end position="118"/>
    </location>
</feature>
<feature type="transmembrane region" description="Helical" evidence="1">
    <location>
        <begin position="131"/>
        <end position="151"/>
    </location>
</feature>
<feature type="transmembrane region" description="Helical" evidence="1">
    <location>
        <begin position="180"/>
        <end position="200"/>
    </location>
</feature>
<proteinExistence type="evidence at protein level"/>
<accession>P10204</accession>
<evidence type="ECO:0000255" key="1"/>
<evidence type="ECO:0000269" key="2">
    <source>
    </source>
</evidence>
<evidence type="ECO:0000269" key="3">
    <source>
    </source>
</evidence>
<evidence type="ECO:0000269" key="4">
    <source>
    </source>
</evidence>
<evidence type="ECO:0000269" key="5">
    <source>
    </source>
</evidence>
<evidence type="ECO:0000269" key="6">
    <source>
    </source>
</evidence>
<evidence type="ECO:0000269" key="7">
    <source>
    </source>
</evidence>
<evidence type="ECO:0000269" key="8">
    <source>
    </source>
</evidence>
<evidence type="ECO:0000305" key="9"/>